<keyword id="KW-0067">ATP-binding</keyword>
<keyword id="KW-0997">Cell inner membrane</keyword>
<keyword id="KW-1003">Cell membrane</keyword>
<keyword id="KW-0472">Membrane</keyword>
<keyword id="KW-0547">Nucleotide-binding</keyword>
<keyword id="KW-0592">Phosphate transport</keyword>
<keyword id="KW-1185">Reference proteome</keyword>
<keyword id="KW-1278">Translocase</keyword>
<keyword id="KW-0813">Transport</keyword>
<gene>
    <name evidence="1" type="primary">pstB</name>
    <name type="ordered locus">Acid345_2972</name>
</gene>
<dbReference type="EC" id="7.3.2.1" evidence="1"/>
<dbReference type="EMBL" id="CP000360">
    <property type="protein sequence ID" value="ABF41973.1"/>
    <property type="molecule type" value="Genomic_DNA"/>
</dbReference>
<dbReference type="RefSeq" id="WP_011523774.1">
    <property type="nucleotide sequence ID" value="NC_008009.1"/>
</dbReference>
<dbReference type="SMR" id="Q1IMC7"/>
<dbReference type="STRING" id="204669.Acid345_2972"/>
<dbReference type="EnsemblBacteria" id="ABF41973">
    <property type="protein sequence ID" value="ABF41973"/>
    <property type="gene ID" value="Acid345_2972"/>
</dbReference>
<dbReference type="KEGG" id="aba:Acid345_2972"/>
<dbReference type="eggNOG" id="COG1117">
    <property type="taxonomic scope" value="Bacteria"/>
</dbReference>
<dbReference type="HOGENOM" id="CLU_000604_1_22_0"/>
<dbReference type="OrthoDB" id="2374252at2"/>
<dbReference type="Proteomes" id="UP000002432">
    <property type="component" value="Chromosome"/>
</dbReference>
<dbReference type="GO" id="GO:0005886">
    <property type="term" value="C:plasma membrane"/>
    <property type="evidence" value="ECO:0007669"/>
    <property type="project" value="UniProtKB-SubCell"/>
</dbReference>
<dbReference type="GO" id="GO:0005524">
    <property type="term" value="F:ATP binding"/>
    <property type="evidence" value="ECO:0007669"/>
    <property type="project" value="UniProtKB-KW"/>
</dbReference>
<dbReference type="GO" id="GO:0016887">
    <property type="term" value="F:ATP hydrolysis activity"/>
    <property type="evidence" value="ECO:0007669"/>
    <property type="project" value="InterPro"/>
</dbReference>
<dbReference type="GO" id="GO:0015415">
    <property type="term" value="F:ATPase-coupled phosphate ion transmembrane transporter activity"/>
    <property type="evidence" value="ECO:0007669"/>
    <property type="project" value="UniProtKB-EC"/>
</dbReference>
<dbReference type="GO" id="GO:0035435">
    <property type="term" value="P:phosphate ion transmembrane transport"/>
    <property type="evidence" value="ECO:0007669"/>
    <property type="project" value="InterPro"/>
</dbReference>
<dbReference type="CDD" id="cd03260">
    <property type="entry name" value="ABC_PstB_phosphate_transporter"/>
    <property type="match status" value="1"/>
</dbReference>
<dbReference type="Gene3D" id="3.40.50.300">
    <property type="entry name" value="P-loop containing nucleotide triphosphate hydrolases"/>
    <property type="match status" value="1"/>
</dbReference>
<dbReference type="InterPro" id="IPR003593">
    <property type="entry name" value="AAA+_ATPase"/>
</dbReference>
<dbReference type="InterPro" id="IPR003439">
    <property type="entry name" value="ABC_transporter-like_ATP-bd"/>
</dbReference>
<dbReference type="InterPro" id="IPR017871">
    <property type="entry name" value="ABC_transporter-like_CS"/>
</dbReference>
<dbReference type="InterPro" id="IPR027417">
    <property type="entry name" value="P-loop_NTPase"/>
</dbReference>
<dbReference type="InterPro" id="IPR005670">
    <property type="entry name" value="PstB-like"/>
</dbReference>
<dbReference type="NCBIfam" id="TIGR00972">
    <property type="entry name" value="3a0107s01c2"/>
    <property type="match status" value="1"/>
</dbReference>
<dbReference type="PANTHER" id="PTHR43423">
    <property type="entry name" value="ABC TRANSPORTER I FAMILY MEMBER 17"/>
    <property type="match status" value="1"/>
</dbReference>
<dbReference type="PANTHER" id="PTHR43423:SF1">
    <property type="entry name" value="ABC TRANSPORTER I FAMILY MEMBER 17"/>
    <property type="match status" value="1"/>
</dbReference>
<dbReference type="Pfam" id="PF00005">
    <property type="entry name" value="ABC_tran"/>
    <property type="match status" value="1"/>
</dbReference>
<dbReference type="SMART" id="SM00382">
    <property type="entry name" value="AAA"/>
    <property type="match status" value="1"/>
</dbReference>
<dbReference type="SUPFAM" id="SSF52540">
    <property type="entry name" value="P-loop containing nucleoside triphosphate hydrolases"/>
    <property type="match status" value="1"/>
</dbReference>
<dbReference type="PROSITE" id="PS00211">
    <property type="entry name" value="ABC_TRANSPORTER_1"/>
    <property type="match status" value="1"/>
</dbReference>
<dbReference type="PROSITE" id="PS50893">
    <property type="entry name" value="ABC_TRANSPORTER_2"/>
    <property type="match status" value="1"/>
</dbReference>
<dbReference type="PROSITE" id="PS51238">
    <property type="entry name" value="PSTB"/>
    <property type="match status" value="1"/>
</dbReference>
<reference key="1">
    <citation type="journal article" date="2009" name="Appl. Environ. Microbiol.">
        <title>Three genomes from the phylum Acidobacteria provide insight into the lifestyles of these microorganisms in soils.</title>
        <authorList>
            <person name="Ward N.L."/>
            <person name="Challacombe J.F."/>
            <person name="Janssen P.H."/>
            <person name="Henrissat B."/>
            <person name="Coutinho P.M."/>
            <person name="Wu M."/>
            <person name="Xie G."/>
            <person name="Haft D.H."/>
            <person name="Sait M."/>
            <person name="Badger J."/>
            <person name="Barabote R.D."/>
            <person name="Bradley B."/>
            <person name="Brettin T.S."/>
            <person name="Brinkac L.M."/>
            <person name="Bruce D."/>
            <person name="Creasy T."/>
            <person name="Daugherty S.C."/>
            <person name="Davidsen T.M."/>
            <person name="DeBoy R.T."/>
            <person name="Detter J.C."/>
            <person name="Dodson R.J."/>
            <person name="Durkin A.S."/>
            <person name="Ganapathy A."/>
            <person name="Gwinn-Giglio M."/>
            <person name="Han C.S."/>
            <person name="Khouri H."/>
            <person name="Kiss H."/>
            <person name="Kothari S.P."/>
            <person name="Madupu R."/>
            <person name="Nelson K.E."/>
            <person name="Nelson W.C."/>
            <person name="Paulsen I."/>
            <person name="Penn K."/>
            <person name="Ren Q."/>
            <person name="Rosovitz M.J."/>
            <person name="Selengut J.D."/>
            <person name="Shrivastava S."/>
            <person name="Sullivan S.A."/>
            <person name="Tapia R."/>
            <person name="Thompson L.S."/>
            <person name="Watkins K.L."/>
            <person name="Yang Q."/>
            <person name="Yu C."/>
            <person name="Zafar N."/>
            <person name="Zhou L."/>
            <person name="Kuske C.R."/>
        </authorList>
    </citation>
    <scope>NUCLEOTIDE SEQUENCE [LARGE SCALE GENOMIC DNA]</scope>
    <source>
        <strain>Ellin345</strain>
    </source>
</reference>
<protein>
    <recommendedName>
        <fullName evidence="1">Phosphate import ATP-binding protein PstB</fullName>
        <ecNumber evidence="1">7.3.2.1</ecNumber>
    </recommendedName>
    <alternativeName>
        <fullName evidence="1">ABC phosphate transporter</fullName>
    </alternativeName>
    <alternativeName>
        <fullName evidence="1">Phosphate-transporting ATPase</fullName>
    </alternativeName>
</protein>
<feature type="chain" id="PRO_0000272413" description="Phosphate import ATP-binding protein PstB">
    <location>
        <begin position="1"/>
        <end position="253"/>
    </location>
</feature>
<feature type="domain" description="ABC transporter" evidence="1">
    <location>
        <begin position="5"/>
        <end position="248"/>
    </location>
</feature>
<feature type="binding site" evidence="1">
    <location>
        <begin position="37"/>
        <end position="44"/>
    </location>
    <ligand>
        <name>ATP</name>
        <dbReference type="ChEBI" id="CHEBI:30616"/>
    </ligand>
</feature>
<name>PSTB_KORVE</name>
<sequence length="253" mass="27907">MGVGIQVRDLNAYYGKAHVLKHVDMKMAPNHVTALIGPSGCGKSTFVRCLNRMHETIPEAYAEGEVLVGDKDIYARGTAAVDVRRRVGMVFQKPNPFPTMSIYDNVASGLKLNGIRKKAVLDEAVQRSLEASALWNEVKDHLHKKSGASLSGGQQQRLCIARALAVQPDVLLMDEPASALDPISTSKIEELMFTLKENYTVVVVTHNMQQAARVAEYTGFFLMGSVIEFDTTQKIFTTPSDKRTEDYITGRFG</sequence>
<organism>
    <name type="scientific">Koribacter versatilis (strain Ellin345)</name>
    <dbReference type="NCBI Taxonomy" id="204669"/>
    <lineage>
        <taxon>Bacteria</taxon>
        <taxon>Pseudomonadati</taxon>
        <taxon>Acidobacteriota</taxon>
        <taxon>Terriglobia</taxon>
        <taxon>Terriglobales</taxon>
        <taxon>Candidatus Korobacteraceae</taxon>
        <taxon>Candidatus Korobacter</taxon>
    </lineage>
</organism>
<evidence type="ECO:0000255" key="1">
    <source>
        <dbReference type="HAMAP-Rule" id="MF_01702"/>
    </source>
</evidence>
<accession>Q1IMC7</accession>
<comment type="function">
    <text evidence="1">Part of the ABC transporter complex PstSACB involved in phosphate import. Responsible for energy coupling to the transport system.</text>
</comment>
<comment type="catalytic activity">
    <reaction evidence="1">
        <text>phosphate(out) + ATP + H2O = ADP + 2 phosphate(in) + H(+)</text>
        <dbReference type="Rhea" id="RHEA:24440"/>
        <dbReference type="ChEBI" id="CHEBI:15377"/>
        <dbReference type="ChEBI" id="CHEBI:15378"/>
        <dbReference type="ChEBI" id="CHEBI:30616"/>
        <dbReference type="ChEBI" id="CHEBI:43474"/>
        <dbReference type="ChEBI" id="CHEBI:456216"/>
        <dbReference type="EC" id="7.3.2.1"/>
    </reaction>
</comment>
<comment type="subunit">
    <text evidence="1">The complex is composed of two ATP-binding proteins (PstB), two transmembrane proteins (PstC and PstA) and a solute-binding protein (PstS).</text>
</comment>
<comment type="subcellular location">
    <subcellularLocation>
        <location evidence="1">Cell inner membrane</location>
        <topology evidence="1">Peripheral membrane protein</topology>
    </subcellularLocation>
</comment>
<comment type="similarity">
    <text evidence="1">Belongs to the ABC transporter superfamily. Phosphate importer (TC 3.A.1.7) family.</text>
</comment>
<proteinExistence type="inferred from homology"/>